<comment type="function">
    <text evidence="1">Catalytic subunit of the SLX1-SLX4 structure-specific endonuclease that resolves DNA secondary structures generated during DNA repair and recombination. Has endonuclease activity towards branched DNA substrates, introducing single-strand cuts in duplex DNA close to junctions with ss-DNA.</text>
</comment>
<comment type="cofactor">
    <cofactor evidence="1">
        <name>a divalent metal cation</name>
        <dbReference type="ChEBI" id="CHEBI:60240"/>
    </cofactor>
</comment>
<comment type="subunit">
    <text evidence="1">Forms a heterodimer with SLX4.</text>
</comment>
<comment type="subcellular location">
    <subcellularLocation>
        <location evidence="1">Nucleus</location>
    </subcellularLocation>
</comment>
<comment type="similarity">
    <text evidence="1">Belongs to the SLX1 family.</text>
</comment>
<accession>Q75EA5</accession>
<protein>
    <recommendedName>
        <fullName evidence="1">Structure-specific endonuclease subunit SLX1</fullName>
        <ecNumber evidence="1">3.1.-.-</ecNumber>
    </recommendedName>
</protein>
<gene>
    <name evidence="1" type="primary">SLX1</name>
    <name type="ordered locus">AAR172W</name>
</gene>
<reference key="1">
    <citation type="journal article" date="2004" name="Science">
        <title>The Ashbya gossypii genome as a tool for mapping the ancient Saccharomyces cerevisiae genome.</title>
        <authorList>
            <person name="Dietrich F.S."/>
            <person name="Voegeli S."/>
            <person name="Brachat S."/>
            <person name="Lerch A."/>
            <person name="Gates K."/>
            <person name="Steiner S."/>
            <person name="Mohr C."/>
            <person name="Poehlmann R."/>
            <person name="Luedi P."/>
            <person name="Choi S."/>
            <person name="Wing R.A."/>
            <person name="Flavier A."/>
            <person name="Gaffney T.D."/>
            <person name="Philippsen P."/>
        </authorList>
    </citation>
    <scope>NUCLEOTIDE SEQUENCE [LARGE SCALE GENOMIC DNA]</scope>
    <source>
        <strain>ATCC 10895 / CBS 109.51 / FGSC 9923 / NRRL Y-1056</strain>
    </source>
</reference>
<reference key="2">
    <citation type="journal article" date="2013" name="G3 (Bethesda)">
        <title>Genomes of Ashbya fungi isolated from insects reveal four mating-type loci, numerous translocations, lack of transposons, and distinct gene duplications.</title>
        <authorList>
            <person name="Dietrich F.S."/>
            <person name="Voegeli S."/>
            <person name="Kuo S."/>
            <person name="Philippsen P."/>
        </authorList>
    </citation>
    <scope>GENOME REANNOTATION</scope>
    <source>
        <strain>ATCC 10895 / CBS 109.51 / FGSC 9923 / NRRL Y-1056</strain>
    </source>
</reference>
<evidence type="ECO:0000255" key="1">
    <source>
        <dbReference type="HAMAP-Rule" id="MF_03100"/>
    </source>
</evidence>
<dbReference type="EC" id="3.1.-.-" evidence="1"/>
<dbReference type="EMBL" id="AE016814">
    <property type="protein sequence ID" value="AAS50539.1"/>
    <property type="molecule type" value="Genomic_DNA"/>
</dbReference>
<dbReference type="RefSeq" id="NP_982715.1">
    <property type="nucleotide sequence ID" value="NM_208068.1"/>
</dbReference>
<dbReference type="SMR" id="Q75EA5"/>
<dbReference type="FunCoup" id="Q75EA5">
    <property type="interactions" value="418"/>
</dbReference>
<dbReference type="STRING" id="284811.Q75EA5"/>
<dbReference type="EnsemblFungi" id="AAS50539">
    <property type="protein sequence ID" value="AAS50539"/>
    <property type="gene ID" value="AGOS_AAR172W"/>
</dbReference>
<dbReference type="GeneID" id="4618751"/>
<dbReference type="KEGG" id="ago:AGOS_AAR172W"/>
<dbReference type="eggNOG" id="KOG3005">
    <property type="taxonomic scope" value="Eukaryota"/>
</dbReference>
<dbReference type="HOGENOM" id="CLU_030739_1_1_1"/>
<dbReference type="InParanoid" id="Q75EA5"/>
<dbReference type="OMA" id="HNRGCDF"/>
<dbReference type="OrthoDB" id="24645at2759"/>
<dbReference type="Proteomes" id="UP000000591">
    <property type="component" value="Chromosome I"/>
</dbReference>
<dbReference type="GO" id="GO:0033557">
    <property type="term" value="C:Slx1-Slx4 complex"/>
    <property type="evidence" value="ECO:0000318"/>
    <property type="project" value="GO_Central"/>
</dbReference>
<dbReference type="GO" id="GO:0017108">
    <property type="term" value="F:5'-flap endonuclease activity"/>
    <property type="evidence" value="ECO:0000318"/>
    <property type="project" value="GO_Central"/>
</dbReference>
<dbReference type="GO" id="GO:0008821">
    <property type="term" value="F:crossover junction DNA endonuclease activity"/>
    <property type="evidence" value="ECO:0000318"/>
    <property type="project" value="GO_Central"/>
</dbReference>
<dbReference type="GO" id="GO:0008270">
    <property type="term" value="F:zinc ion binding"/>
    <property type="evidence" value="ECO:0007669"/>
    <property type="project" value="UniProtKB-KW"/>
</dbReference>
<dbReference type="GO" id="GO:0006261">
    <property type="term" value="P:DNA-templated DNA replication"/>
    <property type="evidence" value="ECO:0007669"/>
    <property type="project" value="EnsemblFungi"/>
</dbReference>
<dbReference type="GO" id="GO:0000724">
    <property type="term" value="P:double-strand break repair via homologous recombination"/>
    <property type="evidence" value="ECO:0000318"/>
    <property type="project" value="GO_Central"/>
</dbReference>
<dbReference type="CDD" id="cd10455">
    <property type="entry name" value="GIY-YIG_SLX1"/>
    <property type="match status" value="1"/>
</dbReference>
<dbReference type="FunFam" id="3.40.1440.10:FF:000006">
    <property type="entry name" value="Structure-specific endonuclease subunit SLX1"/>
    <property type="match status" value="1"/>
</dbReference>
<dbReference type="Gene3D" id="3.40.1440.10">
    <property type="entry name" value="GIY-YIG endonuclease"/>
    <property type="match status" value="1"/>
</dbReference>
<dbReference type="Gene3D" id="3.30.40.10">
    <property type="entry name" value="Zinc/RING finger domain, C3HC4 (zinc finger)"/>
    <property type="match status" value="1"/>
</dbReference>
<dbReference type="HAMAP" id="MF_03100">
    <property type="entry name" value="Endonuc_su_Slx1"/>
    <property type="match status" value="1"/>
</dbReference>
<dbReference type="InterPro" id="IPR000305">
    <property type="entry name" value="GIY-YIG_endonuc"/>
</dbReference>
<dbReference type="InterPro" id="IPR035901">
    <property type="entry name" value="GIY-YIG_endonuc_sf"/>
</dbReference>
<dbReference type="InterPro" id="IPR027520">
    <property type="entry name" value="Slx1"/>
</dbReference>
<dbReference type="InterPro" id="IPR048749">
    <property type="entry name" value="SLX1_C"/>
</dbReference>
<dbReference type="InterPro" id="IPR050381">
    <property type="entry name" value="SLX1_endonuclease"/>
</dbReference>
<dbReference type="InterPro" id="IPR013083">
    <property type="entry name" value="Znf_RING/FYVE/PHD"/>
</dbReference>
<dbReference type="PANTHER" id="PTHR20208">
    <property type="entry name" value="STRUCTURE-SPECIFIC ENDONUCLEASE SUBUNIT SLX1"/>
    <property type="match status" value="1"/>
</dbReference>
<dbReference type="PANTHER" id="PTHR20208:SF10">
    <property type="entry name" value="STRUCTURE-SPECIFIC ENDONUCLEASE SUBUNIT SLX1"/>
    <property type="match status" value="1"/>
</dbReference>
<dbReference type="Pfam" id="PF01541">
    <property type="entry name" value="GIY-YIG"/>
    <property type="match status" value="1"/>
</dbReference>
<dbReference type="Pfam" id="PF21202">
    <property type="entry name" value="SLX1_C"/>
    <property type="match status" value="1"/>
</dbReference>
<dbReference type="SMART" id="SM00465">
    <property type="entry name" value="GIYc"/>
    <property type="match status" value="1"/>
</dbReference>
<dbReference type="SUPFAM" id="SSF82771">
    <property type="entry name" value="GIY-YIG endonuclease"/>
    <property type="match status" value="1"/>
</dbReference>
<dbReference type="PROSITE" id="PS50164">
    <property type="entry name" value="GIY_YIG"/>
    <property type="match status" value="1"/>
</dbReference>
<organism>
    <name type="scientific">Eremothecium gossypii (strain ATCC 10895 / CBS 109.51 / FGSC 9923 / NRRL Y-1056)</name>
    <name type="common">Yeast</name>
    <name type="synonym">Ashbya gossypii</name>
    <dbReference type="NCBI Taxonomy" id="284811"/>
    <lineage>
        <taxon>Eukaryota</taxon>
        <taxon>Fungi</taxon>
        <taxon>Dikarya</taxon>
        <taxon>Ascomycota</taxon>
        <taxon>Saccharomycotina</taxon>
        <taxon>Saccharomycetes</taxon>
        <taxon>Saccharomycetales</taxon>
        <taxon>Saccharomycetaceae</taxon>
        <taxon>Eremothecium</taxon>
    </lineage>
</organism>
<name>SLX1_EREGS</name>
<sequence>MGDDIGTAGVPAFYCCYLLRSIPKRLSYYIGSTPNPVRRLRQHNGLLTKGGAYRTKRQGTRPWELAASVSGFPSKIAALQFEHAWQHPYQTRFIKSEDRIVKKKGGGRSIHQRLAVLKLLLHHPFFKVMSLVVHLFSEDIQRVWFLDKYKLEAPFIHVEVDEDALSEPTGEDEESVIEHAKKNLRLVELFYGRSLKEDSECLEEYRRRLQNGAMRCAICEKIVDYVKDSDSFSSEKELVAFCYNSVCDYFSCLSCLYNVFASDEELRTGEIPLIPTSGQCPNCNIELSWARIVRYSMFLSA</sequence>
<proteinExistence type="inferred from homology"/>
<keyword id="KW-0227">DNA damage</keyword>
<keyword id="KW-0233">DNA recombination</keyword>
<keyword id="KW-0234">DNA repair</keyword>
<keyword id="KW-0255">Endonuclease</keyword>
<keyword id="KW-0378">Hydrolase</keyword>
<keyword id="KW-0479">Metal-binding</keyword>
<keyword id="KW-0540">Nuclease</keyword>
<keyword id="KW-0539">Nucleus</keyword>
<keyword id="KW-1185">Reference proteome</keyword>
<keyword id="KW-0862">Zinc</keyword>
<keyword id="KW-0863">Zinc-finger</keyword>
<feature type="chain" id="PRO_0000383771" description="Structure-specific endonuclease subunit SLX1">
    <location>
        <begin position="1"/>
        <end position="301"/>
    </location>
</feature>
<feature type="domain" description="GIY-YIG" evidence="1">
    <location>
        <begin position="12"/>
        <end position="95"/>
    </location>
</feature>
<feature type="zinc finger region" description="SLX1-type" evidence="1">
    <location>
        <begin position="216"/>
        <end position="283"/>
    </location>
</feature>